<keyword id="KW-1185">Reference proteome</keyword>
<keyword id="KW-0678">Repressor</keyword>
<keyword id="KW-0687">Ribonucleoprotein</keyword>
<keyword id="KW-0689">Ribosomal protein</keyword>
<keyword id="KW-0694">RNA-binding</keyword>
<keyword id="KW-0699">rRNA-binding</keyword>
<keyword id="KW-0810">Translation regulation</keyword>
<keyword id="KW-0820">tRNA-binding</keyword>
<comment type="function">
    <text evidence="1">Binds directly to 23S rRNA. Probably involved in E site tRNA release.</text>
</comment>
<comment type="function">
    <text evidence="1">Protein L1 is also a translational repressor protein, it controls the translation of its operon by binding to its mRNA.</text>
</comment>
<comment type="subunit">
    <text evidence="1">Part of the 50S ribosomal subunit.</text>
</comment>
<comment type="similarity">
    <text evidence="1">Belongs to the universal ribosomal protein uL1 family.</text>
</comment>
<gene>
    <name evidence="1" type="primary">rpl1</name>
    <name type="ordered locus">Msed_1635</name>
</gene>
<protein>
    <recommendedName>
        <fullName evidence="1">Large ribosomal subunit protein uL1</fullName>
    </recommendedName>
    <alternativeName>
        <fullName evidence="2">50S ribosomal protein L1</fullName>
    </alternativeName>
</protein>
<sequence length="218" mass="24150">MIVPKEKIEEAVKQALSKENNPKRGFTQSVELIIAFKDVDMKRGDIKLREAIVLPKPPSKPRNVLVVPSLEQMESAKRAEPNVILSKEELQKLQGAKRAVKKLASKNQWFLIAQDSMSLAGRILGPSLGPRGKFPTPLPSSSDVSEYILRYKRSTLVKTKDQPQTQTFVGTEDQPSGDLAENVFAVLNSIEGKIKGPAYIKAIYVKTSMGKPVQINLK</sequence>
<evidence type="ECO:0000255" key="1">
    <source>
        <dbReference type="HAMAP-Rule" id="MF_01318"/>
    </source>
</evidence>
<evidence type="ECO:0000305" key="2"/>
<organism>
    <name type="scientific">Metallosphaera sedula (strain ATCC 51363 / DSM 5348 / JCM 9185 / NBRC 15509 / TH2)</name>
    <dbReference type="NCBI Taxonomy" id="399549"/>
    <lineage>
        <taxon>Archaea</taxon>
        <taxon>Thermoproteota</taxon>
        <taxon>Thermoprotei</taxon>
        <taxon>Sulfolobales</taxon>
        <taxon>Sulfolobaceae</taxon>
        <taxon>Metallosphaera</taxon>
    </lineage>
</organism>
<feature type="chain" id="PRO_1000141431" description="Large ribosomal subunit protein uL1">
    <location>
        <begin position="1"/>
        <end position="218"/>
    </location>
</feature>
<accession>A4YH88</accession>
<dbReference type="EMBL" id="CP000682">
    <property type="protein sequence ID" value="ABP95790.1"/>
    <property type="molecule type" value="Genomic_DNA"/>
</dbReference>
<dbReference type="RefSeq" id="WP_012021577.1">
    <property type="nucleotide sequence ID" value="NC_009440.1"/>
</dbReference>
<dbReference type="SMR" id="A4YH88"/>
<dbReference type="STRING" id="399549.Msed_1635"/>
<dbReference type="GeneID" id="91756142"/>
<dbReference type="KEGG" id="mse:Msed_1635"/>
<dbReference type="eggNOG" id="arCOG04289">
    <property type="taxonomic scope" value="Archaea"/>
</dbReference>
<dbReference type="HOGENOM" id="CLU_062853_4_0_2"/>
<dbReference type="Proteomes" id="UP000000242">
    <property type="component" value="Chromosome"/>
</dbReference>
<dbReference type="GO" id="GO:0015934">
    <property type="term" value="C:large ribosomal subunit"/>
    <property type="evidence" value="ECO:0007669"/>
    <property type="project" value="InterPro"/>
</dbReference>
<dbReference type="GO" id="GO:0019843">
    <property type="term" value="F:rRNA binding"/>
    <property type="evidence" value="ECO:0007669"/>
    <property type="project" value="UniProtKB-UniRule"/>
</dbReference>
<dbReference type="GO" id="GO:0003735">
    <property type="term" value="F:structural constituent of ribosome"/>
    <property type="evidence" value="ECO:0007669"/>
    <property type="project" value="InterPro"/>
</dbReference>
<dbReference type="GO" id="GO:0000049">
    <property type="term" value="F:tRNA binding"/>
    <property type="evidence" value="ECO:0007669"/>
    <property type="project" value="UniProtKB-KW"/>
</dbReference>
<dbReference type="GO" id="GO:0006417">
    <property type="term" value="P:regulation of translation"/>
    <property type="evidence" value="ECO:0007669"/>
    <property type="project" value="UniProtKB-KW"/>
</dbReference>
<dbReference type="GO" id="GO:0006412">
    <property type="term" value="P:translation"/>
    <property type="evidence" value="ECO:0007669"/>
    <property type="project" value="UniProtKB-UniRule"/>
</dbReference>
<dbReference type="CDD" id="cd00403">
    <property type="entry name" value="Ribosomal_L1"/>
    <property type="match status" value="1"/>
</dbReference>
<dbReference type="FunFam" id="3.40.50.790:FF:000005">
    <property type="entry name" value="50S ribosomal protein L1"/>
    <property type="match status" value="1"/>
</dbReference>
<dbReference type="Gene3D" id="3.30.190.20">
    <property type="match status" value="1"/>
</dbReference>
<dbReference type="Gene3D" id="3.40.50.790">
    <property type="match status" value="1"/>
</dbReference>
<dbReference type="HAMAP" id="MF_01318_A">
    <property type="entry name" value="Ribosomal_uL1_A"/>
    <property type="match status" value="1"/>
</dbReference>
<dbReference type="InterPro" id="IPR002143">
    <property type="entry name" value="Ribosomal_uL1"/>
</dbReference>
<dbReference type="InterPro" id="IPR023674">
    <property type="entry name" value="Ribosomal_uL1-like"/>
</dbReference>
<dbReference type="InterPro" id="IPR028364">
    <property type="entry name" value="Ribosomal_uL1/biogenesis"/>
</dbReference>
<dbReference type="InterPro" id="IPR016095">
    <property type="entry name" value="Ribosomal_uL1_3-a/b-sand"/>
</dbReference>
<dbReference type="InterPro" id="IPR023669">
    <property type="entry name" value="Ribosomal_uL1_arc"/>
</dbReference>
<dbReference type="InterPro" id="IPR023673">
    <property type="entry name" value="Ribosomal_uL1_CS"/>
</dbReference>
<dbReference type="NCBIfam" id="NF003244">
    <property type="entry name" value="PRK04203.1"/>
    <property type="match status" value="1"/>
</dbReference>
<dbReference type="PANTHER" id="PTHR36427">
    <property type="entry name" value="54S RIBOSOMAL PROTEIN L1, MITOCHONDRIAL"/>
    <property type="match status" value="1"/>
</dbReference>
<dbReference type="PANTHER" id="PTHR36427:SF3">
    <property type="entry name" value="LARGE RIBOSOMAL SUBUNIT PROTEIN UL1M"/>
    <property type="match status" value="1"/>
</dbReference>
<dbReference type="Pfam" id="PF00687">
    <property type="entry name" value="Ribosomal_L1"/>
    <property type="match status" value="1"/>
</dbReference>
<dbReference type="PIRSF" id="PIRSF002155">
    <property type="entry name" value="Ribosomal_L1"/>
    <property type="match status" value="1"/>
</dbReference>
<dbReference type="SUPFAM" id="SSF56808">
    <property type="entry name" value="Ribosomal protein L1"/>
    <property type="match status" value="1"/>
</dbReference>
<dbReference type="PROSITE" id="PS01199">
    <property type="entry name" value="RIBOSOMAL_L1"/>
    <property type="match status" value="1"/>
</dbReference>
<reference key="1">
    <citation type="journal article" date="2008" name="Appl. Environ. Microbiol.">
        <title>The genome sequence of the metal-mobilizing, extremely thermoacidophilic archaeon Metallosphaera sedula provides insights into bioleaching-associated metabolism.</title>
        <authorList>
            <person name="Auernik K.S."/>
            <person name="Maezato Y."/>
            <person name="Blum P.H."/>
            <person name="Kelly R.M."/>
        </authorList>
    </citation>
    <scope>NUCLEOTIDE SEQUENCE [LARGE SCALE GENOMIC DNA]</scope>
    <source>
        <strain>ATCC 51363 / DSM 5348 / JCM 9185 / NBRC 15509 / TH2</strain>
    </source>
</reference>
<name>RL1_METS5</name>
<proteinExistence type="inferred from homology"/>